<organism>
    <name type="scientific">Methanococcus maripaludis (strain C6 / ATCC BAA-1332)</name>
    <dbReference type="NCBI Taxonomy" id="444158"/>
    <lineage>
        <taxon>Archaea</taxon>
        <taxon>Methanobacteriati</taxon>
        <taxon>Methanobacteriota</taxon>
        <taxon>Methanomada group</taxon>
        <taxon>Methanococci</taxon>
        <taxon>Methanococcales</taxon>
        <taxon>Methanococcaceae</taxon>
        <taxon>Methanococcus</taxon>
    </lineage>
</organism>
<dbReference type="EMBL" id="CP000867">
    <property type="protein sequence ID" value="ABX02428.1"/>
    <property type="molecule type" value="Genomic_DNA"/>
</dbReference>
<dbReference type="SMR" id="A9AAQ5"/>
<dbReference type="STRING" id="444158.MmarC6_1616"/>
<dbReference type="KEGG" id="mmx:MmarC6_1616"/>
<dbReference type="eggNOG" id="arCOG04102">
    <property type="taxonomic scope" value="Archaea"/>
</dbReference>
<dbReference type="HOGENOM" id="CLU_135754_2_2_2"/>
<dbReference type="OrthoDB" id="24971at2157"/>
<dbReference type="PhylomeDB" id="A9AAQ5"/>
<dbReference type="GO" id="GO:0005886">
    <property type="term" value="C:plasma membrane"/>
    <property type="evidence" value="ECO:0007669"/>
    <property type="project" value="UniProtKB-SubCell"/>
</dbReference>
<dbReference type="GO" id="GO:0005524">
    <property type="term" value="F:ATP binding"/>
    <property type="evidence" value="ECO:0007669"/>
    <property type="project" value="UniProtKB-UniRule"/>
</dbReference>
<dbReference type="GO" id="GO:0046933">
    <property type="term" value="F:proton-transporting ATP synthase activity, rotational mechanism"/>
    <property type="evidence" value="ECO:0007669"/>
    <property type="project" value="UniProtKB-UniRule"/>
</dbReference>
<dbReference type="GO" id="GO:0046961">
    <property type="term" value="F:proton-transporting ATPase activity, rotational mechanism"/>
    <property type="evidence" value="ECO:0007669"/>
    <property type="project" value="InterPro"/>
</dbReference>
<dbReference type="GO" id="GO:0042777">
    <property type="term" value="P:proton motive force-driven plasma membrane ATP synthesis"/>
    <property type="evidence" value="ECO:0007669"/>
    <property type="project" value="UniProtKB-UniRule"/>
</dbReference>
<dbReference type="Gene3D" id="3.40.50.10580">
    <property type="entry name" value="ATPase, V1 complex, subunit F"/>
    <property type="match status" value="1"/>
</dbReference>
<dbReference type="HAMAP" id="MF_00312">
    <property type="entry name" value="ATP_synth_F_arch"/>
    <property type="match status" value="1"/>
</dbReference>
<dbReference type="InterPro" id="IPR008218">
    <property type="entry name" value="ATPase_V1-cplx_f_g_su"/>
</dbReference>
<dbReference type="InterPro" id="IPR022944">
    <property type="entry name" value="ATPase_V1-cplx_fsu_bac/arc"/>
</dbReference>
<dbReference type="InterPro" id="IPR036906">
    <property type="entry name" value="ATPase_V1_fsu_sf"/>
</dbReference>
<dbReference type="NCBIfam" id="NF003047">
    <property type="entry name" value="PRK03957.1"/>
    <property type="match status" value="1"/>
</dbReference>
<dbReference type="Pfam" id="PF01990">
    <property type="entry name" value="ATP-synt_F"/>
    <property type="match status" value="1"/>
</dbReference>
<dbReference type="SUPFAM" id="SSF159468">
    <property type="entry name" value="AtpF-like"/>
    <property type="match status" value="1"/>
</dbReference>
<sequence length="99" mass="10704">MRIGVVGDPDVVVGFRLAGLTDVYEVKSPEQAAKAIEELNNNSEIGLIITTERIGEQIRDSISGVKKIVVEVPDKNGPIVRENDPVKVLVRNAVGVDIK</sequence>
<accession>A9AAQ5</accession>
<feature type="chain" id="PRO_1000115688" description="A-type ATP synthase subunit F">
    <location>
        <begin position="1"/>
        <end position="99"/>
    </location>
</feature>
<protein>
    <recommendedName>
        <fullName evidence="1">A-type ATP synthase subunit F</fullName>
    </recommendedName>
</protein>
<keyword id="KW-0066">ATP synthesis</keyword>
<keyword id="KW-1003">Cell membrane</keyword>
<keyword id="KW-0375">Hydrogen ion transport</keyword>
<keyword id="KW-0406">Ion transport</keyword>
<keyword id="KW-0472">Membrane</keyword>
<keyword id="KW-0813">Transport</keyword>
<name>AATF_METM6</name>
<proteinExistence type="inferred from homology"/>
<reference key="1">
    <citation type="submission" date="2007-10" db="EMBL/GenBank/DDBJ databases">
        <title>Complete sequence of Methanococcus maripaludis C6.</title>
        <authorList>
            <consortium name="US DOE Joint Genome Institute"/>
            <person name="Copeland A."/>
            <person name="Lucas S."/>
            <person name="Lapidus A."/>
            <person name="Barry K."/>
            <person name="Glavina del Rio T."/>
            <person name="Dalin E."/>
            <person name="Tice H."/>
            <person name="Pitluck S."/>
            <person name="Clum A."/>
            <person name="Schmutz J."/>
            <person name="Larimer F."/>
            <person name="Land M."/>
            <person name="Hauser L."/>
            <person name="Kyrpides N."/>
            <person name="Mikhailova N."/>
            <person name="Sieprawska-Lupa M."/>
            <person name="Whitman W.B."/>
            <person name="Richardson P."/>
        </authorList>
    </citation>
    <scope>NUCLEOTIDE SEQUENCE [LARGE SCALE GENOMIC DNA]</scope>
    <source>
        <strain>C6 / ATCC BAA-1332</strain>
    </source>
</reference>
<gene>
    <name evidence="1" type="primary">atpF</name>
    <name type="ordered locus">MmarC6_1616</name>
</gene>
<comment type="function">
    <text evidence="1">Component of the A-type ATP synthase that produces ATP from ADP in the presence of a proton gradient across the membrane.</text>
</comment>
<comment type="subunit">
    <text evidence="1">Has multiple subunits with at least A(3), B(3), C, D, E, F, H, I and proteolipid K(x).</text>
</comment>
<comment type="subcellular location">
    <subcellularLocation>
        <location evidence="1">Cell membrane</location>
        <topology evidence="1">Peripheral membrane protein</topology>
    </subcellularLocation>
</comment>
<comment type="similarity">
    <text evidence="1">Belongs to the V-ATPase F subunit family.</text>
</comment>
<evidence type="ECO:0000255" key="1">
    <source>
        <dbReference type="HAMAP-Rule" id="MF_00312"/>
    </source>
</evidence>